<evidence type="ECO:0000250" key="1"/>
<evidence type="ECO:0000256" key="2">
    <source>
        <dbReference type="SAM" id="MobiDB-lite"/>
    </source>
</evidence>
<evidence type="ECO:0000305" key="3"/>
<keyword id="KW-0548">Nucleotidyltransferase</keyword>
<keyword id="KW-1185">Reference proteome</keyword>
<keyword id="KW-0694">RNA-binding</keyword>
<keyword id="KW-0696">RNA-directed RNA polymerase</keyword>
<keyword id="KW-0943">RNA-mediated gene silencing</keyword>
<keyword id="KW-0808">Transferase</keyword>
<accession>O82189</accession>
<organism>
    <name type="scientific">Arabidopsis thaliana</name>
    <name type="common">Mouse-ear cress</name>
    <dbReference type="NCBI Taxonomy" id="3702"/>
    <lineage>
        <taxon>Eukaryota</taxon>
        <taxon>Viridiplantae</taxon>
        <taxon>Streptophyta</taxon>
        <taxon>Embryophyta</taxon>
        <taxon>Tracheophyta</taxon>
        <taxon>Spermatophyta</taxon>
        <taxon>Magnoliopsida</taxon>
        <taxon>eudicotyledons</taxon>
        <taxon>Gunneridae</taxon>
        <taxon>Pentapetalae</taxon>
        <taxon>rosids</taxon>
        <taxon>malvids</taxon>
        <taxon>Brassicales</taxon>
        <taxon>Brassicaceae</taxon>
        <taxon>Camelineae</taxon>
        <taxon>Arabidopsis</taxon>
    </lineage>
</organism>
<feature type="chain" id="PRO_0000404675" description="Probable RNA-dependent RNA polymerase 4">
    <location>
        <begin position="1"/>
        <end position="927"/>
    </location>
</feature>
<feature type="region of interest" description="Disordered" evidence="2">
    <location>
        <begin position="98"/>
        <end position="135"/>
    </location>
</feature>
<feature type="compositionally biased region" description="Basic and acidic residues" evidence="2">
    <location>
        <begin position="121"/>
        <end position="135"/>
    </location>
</feature>
<gene>
    <name type="primary">RDR4</name>
    <name type="synonym">RDRP4</name>
    <name type="ordered locus">At2g19920</name>
    <name type="ORF">F6F22.5</name>
</gene>
<comment type="function">
    <text evidence="1">Probably involved in the RNA silencing pathway and required for the generation of small interfering RNAs (siRNAs).</text>
</comment>
<comment type="catalytic activity">
    <reaction>
        <text>RNA(n) + a ribonucleoside 5'-triphosphate = RNA(n+1) + diphosphate</text>
        <dbReference type="Rhea" id="RHEA:21248"/>
        <dbReference type="Rhea" id="RHEA-COMP:14527"/>
        <dbReference type="Rhea" id="RHEA-COMP:17342"/>
        <dbReference type="ChEBI" id="CHEBI:33019"/>
        <dbReference type="ChEBI" id="CHEBI:61557"/>
        <dbReference type="ChEBI" id="CHEBI:140395"/>
        <dbReference type="EC" id="2.7.7.48"/>
    </reaction>
</comment>
<comment type="similarity">
    <text evidence="3">Belongs to the RdRP family.</text>
</comment>
<comment type="sequence caution" evidence="3">
    <conflict type="erroneous gene model prediction">
        <sequence resource="EMBL-CDS" id="AAC62124"/>
    </conflict>
</comment>
<sequence length="927" mass="105180">MMTTTMDYNSSDQGFSWSEIALLGSVETMLEKVYGKHNHHPPIKVETRRRLSSISEELALETLRKVLNMPNVKTLDGIIIYFLNDAVTVDGSPRLWSGESPVQFPRTPGKKSCRASQAEVSLDREDPSPKFLRGDENGESKHISLLLALGELEFKKAFLLLTYLGGKSLGEVISGDEIRQWKDLPMVAYERAVWFKLGQNEERMQLESDSGKTHYYQCHVAPDGSYRLKGYFLENTGTHLHKVLGDDNVLTVRFDQLPKESTYCDNPYSKYKEIAKNGIMVGLRRYQFFVFKDGGKAEKKKRNSTKQVKCYFIRTGSTASSDMENPYILSGMSIHEARMHFMHVHTLPSPANYMARFSLILSKTKKLEVDMTEITVMQIDDIHCHDQSNNDVLDKNGKPRIHSDGTGYISEDLARMCPLNIFKGKSMRSNNIQGTCVQEPPLLIQIRMFNDGSAVKGIFLLNKNLPPQTVQVRPSMIKVYKDKNLSNFSTFNSLEVVTTSNPPKRAKLSKNLVALLSYGGVPNDFFLDILLNTLEKKKTIFFKVRAAGKAALHYGNMDDKNALQMIMAGIPLDEPYLKHYLSKLLKLEKDDLKAGKLPIDESYYLMGTVDPTGELKEDEVSGLAKSQDVLVYRNPGLHFGDIHILKATYVKSLEQYVGNSKYGVFFPQKGPRSLGDEIAGGDFDGDMYFISRNPKLLEHYKPSEPWVSSSPRSKIYTGRQPSELSPEQLEEELFKIFLKTGFSPSSVIGQAADSWLAIMDRFLTLGDENVKEKAEMKKKMLKLTDIYYDAIDAPKTGTEVNLPLDVKVDLFPHYMERNKTFKSTSILGLIFDTVDFHNAEDTTPSGISKLQCFEDEPVSEFDMEKCKLWHKDYRKEMCQAMNSDDDDSCNEVIQKYKQEFYSAAGFKESKKILEELYPKALALYNVT</sequence>
<dbReference type="EC" id="2.7.7.48"/>
<dbReference type="EMBL" id="AC005169">
    <property type="protein sequence ID" value="AAC62124.1"/>
    <property type="status" value="ALT_SEQ"/>
    <property type="molecule type" value="Genomic_DNA"/>
</dbReference>
<dbReference type="EMBL" id="CP002685">
    <property type="protein sequence ID" value="AEC06943.1"/>
    <property type="molecule type" value="Genomic_DNA"/>
</dbReference>
<dbReference type="PIR" id="G84582">
    <property type="entry name" value="G84582"/>
</dbReference>
<dbReference type="RefSeq" id="NP_179582.2">
    <property type="nucleotide sequence ID" value="NM_127550.3"/>
</dbReference>
<dbReference type="SMR" id="O82189"/>
<dbReference type="BioGRID" id="1866">
    <property type="interactions" value="1"/>
</dbReference>
<dbReference type="STRING" id="3702.O82189"/>
<dbReference type="PaxDb" id="3702-AT2G19920.1"/>
<dbReference type="EnsemblPlants" id="AT2G19920.1">
    <property type="protein sequence ID" value="AT2G19920.1"/>
    <property type="gene ID" value="AT2G19920"/>
</dbReference>
<dbReference type="GeneID" id="816511"/>
<dbReference type="Gramene" id="AT2G19920.1">
    <property type="protein sequence ID" value="AT2G19920.1"/>
    <property type="gene ID" value="AT2G19920"/>
</dbReference>
<dbReference type="KEGG" id="ath:AT2G19920"/>
<dbReference type="Araport" id="AT2G19920"/>
<dbReference type="TAIR" id="AT2G19920"/>
<dbReference type="eggNOG" id="KOG0988">
    <property type="taxonomic scope" value="Eukaryota"/>
</dbReference>
<dbReference type="HOGENOM" id="CLU_008367_0_0_1"/>
<dbReference type="InParanoid" id="O82189"/>
<dbReference type="PhylomeDB" id="O82189"/>
<dbReference type="PRO" id="PR:O82189"/>
<dbReference type="Proteomes" id="UP000006548">
    <property type="component" value="Chromosome 2"/>
</dbReference>
<dbReference type="ExpressionAtlas" id="O82189">
    <property type="expression patterns" value="baseline and differential"/>
</dbReference>
<dbReference type="GO" id="GO:0003723">
    <property type="term" value="F:RNA binding"/>
    <property type="evidence" value="ECO:0007669"/>
    <property type="project" value="UniProtKB-KW"/>
</dbReference>
<dbReference type="GO" id="GO:0003968">
    <property type="term" value="F:RNA-directed RNA polymerase activity"/>
    <property type="evidence" value="ECO:0007669"/>
    <property type="project" value="UniProtKB-KW"/>
</dbReference>
<dbReference type="GO" id="GO:0031047">
    <property type="term" value="P:regulatory ncRNA-mediated gene silencing"/>
    <property type="evidence" value="ECO:0007669"/>
    <property type="project" value="UniProtKB-KW"/>
</dbReference>
<dbReference type="InterPro" id="IPR007855">
    <property type="entry name" value="RNA-dep_RNA_pol_euk-typ"/>
</dbReference>
<dbReference type="PANTHER" id="PTHR23079">
    <property type="entry name" value="RNA-DEPENDENT RNA POLYMERASE"/>
    <property type="match status" value="1"/>
</dbReference>
<dbReference type="PANTHER" id="PTHR23079:SF56">
    <property type="entry name" value="RNA-DEPENDENT RNA POLYMERASE 3-RELATED"/>
    <property type="match status" value="1"/>
</dbReference>
<dbReference type="Pfam" id="PF05183">
    <property type="entry name" value="RdRP"/>
    <property type="match status" value="1"/>
</dbReference>
<protein>
    <recommendedName>
        <fullName>Probable RNA-dependent RNA polymerase 4</fullName>
        <shortName>AtRDRP4</shortName>
        <ecNumber>2.7.7.48</ecNumber>
    </recommendedName>
    <alternativeName>
        <fullName>RNA-directed RNA polymerase 4</fullName>
    </alternativeName>
</protein>
<reference key="1">
    <citation type="journal article" date="1999" name="Nature">
        <title>Sequence and analysis of chromosome 2 of the plant Arabidopsis thaliana.</title>
        <authorList>
            <person name="Lin X."/>
            <person name="Kaul S."/>
            <person name="Rounsley S.D."/>
            <person name="Shea T.P."/>
            <person name="Benito M.-I."/>
            <person name="Town C.D."/>
            <person name="Fujii C.Y."/>
            <person name="Mason T.M."/>
            <person name="Bowman C.L."/>
            <person name="Barnstead M.E."/>
            <person name="Feldblyum T.V."/>
            <person name="Buell C.R."/>
            <person name="Ketchum K.A."/>
            <person name="Lee J.J."/>
            <person name="Ronning C.M."/>
            <person name="Koo H.L."/>
            <person name="Moffat K.S."/>
            <person name="Cronin L.A."/>
            <person name="Shen M."/>
            <person name="Pai G."/>
            <person name="Van Aken S."/>
            <person name="Umayam L."/>
            <person name="Tallon L.J."/>
            <person name="Gill J.E."/>
            <person name="Adams M.D."/>
            <person name="Carrera A.J."/>
            <person name="Creasy T.H."/>
            <person name="Goodman H.M."/>
            <person name="Somerville C.R."/>
            <person name="Copenhaver G.P."/>
            <person name="Preuss D."/>
            <person name="Nierman W.C."/>
            <person name="White O."/>
            <person name="Eisen J.A."/>
            <person name="Salzberg S.L."/>
            <person name="Fraser C.M."/>
            <person name="Venter J.C."/>
        </authorList>
    </citation>
    <scope>NUCLEOTIDE SEQUENCE [LARGE SCALE GENOMIC DNA]</scope>
    <source>
        <strain>cv. Columbia</strain>
    </source>
</reference>
<reference key="2">
    <citation type="journal article" date="2017" name="Plant J.">
        <title>Araport11: a complete reannotation of the Arabidopsis thaliana reference genome.</title>
        <authorList>
            <person name="Cheng C.Y."/>
            <person name="Krishnakumar V."/>
            <person name="Chan A.P."/>
            <person name="Thibaud-Nissen F."/>
            <person name="Schobel S."/>
            <person name="Town C.D."/>
        </authorList>
    </citation>
    <scope>GENOME REANNOTATION</scope>
    <source>
        <strain>cv. Columbia</strain>
    </source>
</reference>
<name>RDR4_ARATH</name>
<proteinExistence type="inferred from homology"/>